<keyword id="KW-0067">ATP-binding</keyword>
<keyword id="KW-0378">Hydrolase</keyword>
<keyword id="KW-0472">Membrane</keyword>
<keyword id="KW-0547">Nucleotide-binding</keyword>
<keyword id="KW-0548">Nucleotidyltransferase</keyword>
<keyword id="KW-1185">Reference proteome</keyword>
<keyword id="KW-0677">Repeat</keyword>
<keyword id="KW-0802">TPR repeat</keyword>
<keyword id="KW-0808">Transferase</keyword>
<keyword id="KW-0812">Transmembrane</keyword>
<keyword id="KW-1133">Transmembrane helix</keyword>
<evidence type="ECO:0000250" key="1">
    <source>
        <dbReference type="UniProtKB" id="A0A061I403"/>
    </source>
</evidence>
<evidence type="ECO:0000250" key="2">
    <source>
        <dbReference type="UniProtKB" id="Q8SWV6"/>
    </source>
</evidence>
<evidence type="ECO:0000250" key="3">
    <source>
        <dbReference type="UniProtKB" id="Q9BVA6"/>
    </source>
</evidence>
<evidence type="ECO:0000255" key="4"/>
<evidence type="ECO:0000255" key="5">
    <source>
        <dbReference type="PROSITE-ProRule" id="PRU00791"/>
    </source>
</evidence>
<evidence type="ECO:0000305" key="6"/>
<reference key="1">
    <citation type="journal article" date="2007" name="Nature">
        <title>Evolution of genes and genomes on the Drosophila phylogeny.</title>
        <authorList>
            <consortium name="Drosophila 12 genomes consortium"/>
        </authorList>
    </citation>
    <scope>NUCLEOTIDE SEQUENCE [LARGE SCALE GENOMIC DNA]</scope>
    <source>
        <strain>Tucson 14030-0811.24</strain>
    </source>
</reference>
<proteinExistence type="inferred from homology"/>
<sequence length="498" mass="56666">MPWEFLKKCDRQKAEVRGEKEEQEPVPGNPHFQVQFHVTSCRFAFLAFLAGSFLAFSLHALISSNLFWRLRQLHHLPTAHYLQTRDEFAVYSVDELNAFKEFYDKSTADSVGATYTEAEETNIKEALSSLRLAQDMYMAGKDDKAARLFEHALALAPRHPEVLLRYGEFLEHNQRNIVLADQYYFQALTINPSHSEALANRQRTADVVQTLDERRLASLDAKRAALSAIHEANSALRRAKKEAYFQHIYHSVGIEGNTMTLAQTRSILETRMAVDGKSIDEHNEILGMDLAMKYINASLVQKLEITIKDILELHRRVLGHVDPIEGGEFRRNQVYVGGHVPPGPGDLAVLMQRFEDWLNSEYSSSLHPVNYAALAHYKLVHIHPFIDGNGRTSRLLMNTLLMRAGYPPVIIPKQQRSKYYHFLKLANEGDIRPFVRFIADCTEKTLDLYLWATSDLPQQIPMLIQTETEAGEQLVKLQSPQMASIPESFYESGSGALP</sequence>
<protein>
    <recommendedName>
        <fullName>Protein adenylyltransferase Fic</fullName>
        <ecNumber evidence="2">2.7.7.108</ecNumber>
    </recommendedName>
    <alternativeName>
        <fullName evidence="6">De-AMPylase Fic</fullName>
        <ecNumber evidence="1 2">3.1.4.-</ecNumber>
    </alternativeName>
</protein>
<comment type="function">
    <text evidence="1 2">Protein that can both mediate the addition of adenosine 5'-monophosphate (AMP) to specific residues of target proteins (AMPylation), and the removal of the same modification from target proteins (de-AMPylation), depending on the context (By similarity). The side chain of Glu-255 determines which of the two opposing activities (AMPylase or de-AMPylase) will take place (By similarity). Acts as a key regulator of the unfolded protein response (UPR) by mediating AMPylation or de-AMPylation of Hsc70-3/BiP. In unstressed cells, acts as an adenylyltransferase by mediating AMPylation of Hsc70-3/BiP at 'Thr-518', thereby inactivating it. In response to endoplasmic reticulum stress, acts as a phosphodiesterase by mediating removal of ATP (de-AMPylation) from Hsc70-3/BiP at 'Thr-518', leading to restore HSPA5/BiP activity (By similarity).</text>
</comment>
<comment type="catalytic activity">
    <reaction evidence="3">
        <text>L-tyrosyl-[protein] + ATP = O-(5'-adenylyl)-L-tyrosyl-[protein] + diphosphate</text>
        <dbReference type="Rhea" id="RHEA:54288"/>
        <dbReference type="Rhea" id="RHEA-COMP:10136"/>
        <dbReference type="Rhea" id="RHEA-COMP:13846"/>
        <dbReference type="ChEBI" id="CHEBI:30616"/>
        <dbReference type="ChEBI" id="CHEBI:33019"/>
        <dbReference type="ChEBI" id="CHEBI:46858"/>
        <dbReference type="ChEBI" id="CHEBI:83624"/>
        <dbReference type="EC" id="2.7.7.108"/>
    </reaction>
</comment>
<comment type="catalytic activity">
    <reaction evidence="2">
        <text>L-threonyl-[protein] + ATP = 3-O-(5'-adenylyl)-L-threonyl-[protein] + diphosphate</text>
        <dbReference type="Rhea" id="RHEA:54292"/>
        <dbReference type="Rhea" id="RHEA-COMP:11060"/>
        <dbReference type="Rhea" id="RHEA-COMP:13847"/>
        <dbReference type="ChEBI" id="CHEBI:30013"/>
        <dbReference type="ChEBI" id="CHEBI:30616"/>
        <dbReference type="ChEBI" id="CHEBI:33019"/>
        <dbReference type="ChEBI" id="CHEBI:138113"/>
        <dbReference type="EC" id="2.7.7.108"/>
    </reaction>
</comment>
<comment type="catalytic activity">
    <reaction evidence="2">
        <text>3-O-(5'-adenylyl)-L-threonyl-[protein] + H2O = L-threonyl-[protein] + AMP + H(+)</text>
        <dbReference type="Rhea" id="RHEA:55932"/>
        <dbReference type="Rhea" id="RHEA-COMP:11060"/>
        <dbReference type="Rhea" id="RHEA-COMP:13847"/>
        <dbReference type="ChEBI" id="CHEBI:15377"/>
        <dbReference type="ChEBI" id="CHEBI:15378"/>
        <dbReference type="ChEBI" id="CHEBI:30013"/>
        <dbReference type="ChEBI" id="CHEBI:138113"/>
        <dbReference type="ChEBI" id="CHEBI:456215"/>
    </reaction>
</comment>
<comment type="activity regulation">
    <text evidence="1 3">The side chain of Glu-255 determines which of the two opposing activities (AMPylase or de-AMPylase) will take place. In response to endoplasmic reticulum stress, mediates de-AMPylase activity (By similarity). Adenylyltransferase activity is inhibited by the inhibitory helix present at the N-terminus: Glu-255 binds ATP and competes with ATP-binding at Arg-394, thereby preventing adenylyltransferase activity (By similarity). In unstressed cells, disengagement of Glu-255 promotes adenylyltransferase activity (By similarity). Activation dissociates ATP-binding from Glu-255, allowing ordered binding of the entire ATP moiety with the alpha-phosphate in an orientation that is productive for accepting an incoming target hydroxyl side chain (By similarity).</text>
</comment>
<comment type="subunit">
    <text evidence="2">Homodimer.</text>
</comment>
<comment type="subcellular location">
    <subcellularLocation>
        <location evidence="2">Membrane</location>
        <topology evidence="2">Single-pass membrane protein</topology>
    </subcellularLocation>
</comment>
<comment type="domain">
    <text evidence="3">The fido domain mediates the adenylyltransferase activity.</text>
</comment>
<comment type="similarity">
    <text evidence="6">Belongs to the fic family.</text>
</comment>
<feature type="chain" id="PRO_0000381792" description="Protein adenylyltransferase Fic">
    <location>
        <begin position="1"/>
        <end position="498"/>
    </location>
</feature>
<feature type="transmembrane region" description="Helical" evidence="4">
    <location>
        <begin position="43"/>
        <end position="63"/>
    </location>
</feature>
<feature type="repeat" description="TPR 1">
    <location>
        <begin position="126"/>
        <end position="159"/>
    </location>
</feature>
<feature type="repeat" description="TPR 2">
    <location>
        <begin position="160"/>
        <end position="194"/>
    </location>
</feature>
<feature type="domain" description="Fido" evidence="5">
    <location>
        <begin position="305"/>
        <end position="440"/>
    </location>
</feature>
<feature type="short sequence motif" description="Inhibitory (S/T)XXXE(G/N) motif">
    <location>
        <begin position="251"/>
        <end position="256"/>
    </location>
</feature>
<feature type="active site" evidence="1">
    <location>
        <position position="383"/>
    </location>
</feature>
<feature type="binding site" evidence="3">
    <location>
        <position position="255"/>
    </location>
    <ligand>
        <name>ATP</name>
        <dbReference type="ChEBI" id="CHEBI:30616"/>
    </ligand>
</feature>
<feature type="binding site" evidence="3">
    <location>
        <begin position="336"/>
        <end position="339"/>
    </location>
    <ligand>
        <name>ATP</name>
        <dbReference type="ChEBI" id="CHEBI:30616"/>
    </ligand>
</feature>
<feature type="binding site" evidence="3">
    <location>
        <begin position="387"/>
        <end position="394"/>
    </location>
    <ligand>
        <name>ATP</name>
        <dbReference type="ChEBI" id="CHEBI:30616"/>
    </ligand>
</feature>
<feature type="binding site" evidence="3">
    <location>
        <begin position="419"/>
        <end position="420"/>
    </location>
    <ligand>
        <name>ATP</name>
        <dbReference type="ChEBI" id="CHEBI:30616"/>
    </ligand>
</feature>
<feature type="binding site" evidence="3">
    <location>
        <position position="427"/>
    </location>
    <ligand>
        <name>ATP</name>
        <dbReference type="ChEBI" id="CHEBI:30616"/>
    </ligand>
</feature>
<feature type="site" description="Important for autoinhibition of adenylyltransferase activity" evidence="3">
    <location>
        <position position="255"/>
    </location>
</feature>
<gene>
    <name type="ORF">GK14760</name>
</gene>
<organism>
    <name type="scientific">Drosophila willistoni</name>
    <name type="common">Fruit fly</name>
    <dbReference type="NCBI Taxonomy" id="7260"/>
    <lineage>
        <taxon>Eukaryota</taxon>
        <taxon>Metazoa</taxon>
        <taxon>Ecdysozoa</taxon>
        <taxon>Arthropoda</taxon>
        <taxon>Hexapoda</taxon>
        <taxon>Insecta</taxon>
        <taxon>Pterygota</taxon>
        <taxon>Neoptera</taxon>
        <taxon>Endopterygota</taxon>
        <taxon>Diptera</taxon>
        <taxon>Brachycera</taxon>
        <taxon>Muscomorpha</taxon>
        <taxon>Ephydroidea</taxon>
        <taxon>Drosophilidae</taxon>
        <taxon>Drosophila</taxon>
        <taxon>Sophophora</taxon>
    </lineage>
</organism>
<dbReference type="EC" id="2.7.7.108" evidence="2"/>
<dbReference type="EC" id="3.1.4.-" evidence="1 2"/>
<dbReference type="EMBL" id="CH963857">
    <property type="protein sequence ID" value="EDW76247.1"/>
    <property type="molecule type" value="Genomic_DNA"/>
</dbReference>
<dbReference type="SMR" id="B4MUQ2"/>
<dbReference type="STRING" id="7260.B4MUQ2"/>
<dbReference type="EnsemblMetazoa" id="FBtr0245411">
    <property type="protein sequence ID" value="FBpp0243903"/>
    <property type="gene ID" value="FBgn0216765"/>
</dbReference>
<dbReference type="EnsemblMetazoa" id="XM_002065225.4">
    <property type="protein sequence ID" value="XP_002065261.1"/>
    <property type="gene ID" value="LOC6642575"/>
</dbReference>
<dbReference type="GeneID" id="6642575"/>
<dbReference type="KEGG" id="dwi:6642575"/>
<dbReference type="CTD" id="33897"/>
<dbReference type="eggNOG" id="KOG3824">
    <property type="taxonomic scope" value="Eukaryota"/>
</dbReference>
<dbReference type="HOGENOM" id="CLU_040460_0_0_1"/>
<dbReference type="OMA" id="QLRCQLW"/>
<dbReference type="OrthoDB" id="439046at2759"/>
<dbReference type="PhylomeDB" id="B4MUQ2"/>
<dbReference type="Proteomes" id="UP000007798">
    <property type="component" value="Unassembled WGS sequence"/>
</dbReference>
<dbReference type="GO" id="GO:0005886">
    <property type="term" value="C:plasma membrane"/>
    <property type="evidence" value="ECO:0007669"/>
    <property type="project" value="EnsemblMetazoa"/>
</dbReference>
<dbReference type="GO" id="GO:0070733">
    <property type="term" value="F:AMPylase activity"/>
    <property type="evidence" value="ECO:0000250"/>
    <property type="project" value="UniProtKB"/>
</dbReference>
<dbReference type="GO" id="GO:0005524">
    <property type="term" value="F:ATP binding"/>
    <property type="evidence" value="ECO:0007669"/>
    <property type="project" value="UniProtKB-KW"/>
</dbReference>
<dbReference type="GO" id="GO:0030544">
    <property type="term" value="F:Hsp70 protein binding"/>
    <property type="evidence" value="ECO:0007669"/>
    <property type="project" value="EnsemblMetazoa"/>
</dbReference>
<dbReference type="GO" id="GO:0044603">
    <property type="term" value="F:protein adenylylhydrolase activity"/>
    <property type="evidence" value="ECO:0007669"/>
    <property type="project" value="EnsemblMetazoa"/>
</dbReference>
<dbReference type="GO" id="GO:0042803">
    <property type="term" value="F:protein homodimerization activity"/>
    <property type="evidence" value="ECO:0007669"/>
    <property type="project" value="EnsemblMetazoa"/>
</dbReference>
<dbReference type="GO" id="GO:0050908">
    <property type="term" value="P:detection of light stimulus involved in visual perception"/>
    <property type="evidence" value="ECO:0007669"/>
    <property type="project" value="EnsemblMetazoa"/>
</dbReference>
<dbReference type="GO" id="GO:0051608">
    <property type="term" value="P:histamine transport"/>
    <property type="evidence" value="ECO:0007669"/>
    <property type="project" value="EnsemblMetazoa"/>
</dbReference>
<dbReference type="GO" id="GO:0018117">
    <property type="term" value="P:protein adenylylation"/>
    <property type="evidence" value="ECO:0000250"/>
    <property type="project" value="UniProtKB"/>
</dbReference>
<dbReference type="GO" id="GO:0034976">
    <property type="term" value="P:response to endoplasmic reticulum stress"/>
    <property type="evidence" value="ECO:0007669"/>
    <property type="project" value="EnsemblMetazoa"/>
</dbReference>
<dbReference type="GO" id="GO:0007632">
    <property type="term" value="P:visual behavior"/>
    <property type="evidence" value="ECO:0007669"/>
    <property type="project" value="EnsemblMetazoa"/>
</dbReference>
<dbReference type="FunFam" id="1.10.3290.10:FF:000001">
    <property type="entry name" value="adenosine monophosphate-protein transferase FICD"/>
    <property type="match status" value="1"/>
</dbReference>
<dbReference type="FunFam" id="1.25.40.10:FF:000522">
    <property type="entry name" value="Protein adenylyltransferase Fic"/>
    <property type="match status" value="1"/>
</dbReference>
<dbReference type="Gene3D" id="1.10.3290.10">
    <property type="entry name" value="Fido-like domain"/>
    <property type="match status" value="1"/>
</dbReference>
<dbReference type="Gene3D" id="1.25.40.10">
    <property type="entry name" value="Tetratricopeptide repeat domain"/>
    <property type="match status" value="1"/>
</dbReference>
<dbReference type="InterPro" id="IPR003812">
    <property type="entry name" value="Fido"/>
</dbReference>
<dbReference type="InterPro" id="IPR036597">
    <property type="entry name" value="Fido-like_dom_sf"/>
</dbReference>
<dbReference type="InterPro" id="IPR040198">
    <property type="entry name" value="Fido_containing"/>
</dbReference>
<dbReference type="InterPro" id="IPR011990">
    <property type="entry name" value="TPR-like_helical_dom_sf"/>
</dbReference>
<dbReference type="InterPro" id="IPR019734">
    <property type="entry name" value="TPR_rpt"/>
</dbReference>
<dbReference type="PANTHER" id="PTHR13504">
    <property type="entry name" value="FIDO DOMAIN-CONTAINING PROTEIN DDB_G0283145"/>
    <property type="match status" value="1"/>
</dbReference>
<dbReference type="PANTHER" id="PTHR13504:SF34">
    <property type="entry name" value="PROTEIN ADENYLYLTRANSFERASE FICD"/>
    <property type="match status" value="1"/>
</dbReference>
<dbReference type="Pfam" id="PF02661">
    <property type="entry name" value="Fic"/>
    <property type="match status" value="1"/>
</dbReference>
<dbReference type="SUPFAM" id="SSF140931">
    <property type="entry name" value="Fic-like"/>
    <property type="match status" value="1"/>
</dbReference>
<dbReference type="SUPFAM" id="SSF48452">
    <property type="entry name" value="TPR-like"/>
    <property type="match status" value="1"/>
</dbReference>
<dbReference type="PROSITE" id="PS51459">
    <property type="entry name" value="FIDO"/>
    <property type="match status" value="1"/>
</dbReference>
<dbReference type="PROSITE" id="PS50005">
    <property type="entry name" value="TPR"/>
    <property type="match status" value="1"/>
</dbReference>
<dbReference type="PROSITE" id="PS50293">
    <property type="entry name" value="TPR_REGION"/>
    <property type="match status" value="1"/>
</dbReference>
<name>FICD_DROWI</name>
<accession>B4MUQ2</accession>